<gene>
    <name evidence="1" type="primary">rph</name>
    <name type="ordered locus">Nham_0151</name>
</gene>
<evidence type="ECO:0000255" key="1">
    <source>
        <dbReference type="HAMAP-Rule" id="MF_00564"/>
    </source>
</evidence>
<dbReference type="EC" id="2.7.7.56" evidence="1"/>
<dbReference type="EMBL" id="CP000319">
    <property type="protein sequence ID" value="ABE61052.1"/>
    <property type="molecule type" value="Genomic_DNA"/>
</dbReference>
<dbReference type="RefSeq" id="WP_011508758.1">
    <property type="nucleotide sequence ID" value="NC_007964.1"/>
</dbReference>
<dbReference type="SMR" id="Q1QRU5"/>
<dbReference type="STRING" id="323097.Nham_0151"/>
<dbReference type="KEGG" id="nha:Nham_0151"/>
<dbReference type="eggNOG" id="COG0689">
    <property type="taxonomic scope" value="Bacteria"/>
</dbReference>
<dbReference type="HOGENOM" id="CLU_050858_0_0_5"/>
<dbReference type="OrthoDB" id="9802265at2"/>
<dbReference type="Proteomes" id="UP000001953">
    <property type="component" value="Chromosome"/>
</dbReference>
<dbReference type="GO" id="GO:0000175">
    <property type="term" value="F:3'-5'-RNA exonuclease activity"/>
    <property type="evidence" value="ECO:0007669"/>
    <property type="project" value="UniProtKB-UniRule"/>
</dbReference>
<dbReference type="GO" id="GO:0000049">
    <property type="term" value="F:tRNA binding"/>
    <property type="evidence" value="ECO:0007669"/>
    <property type="project" value="UniProtKB-UniRule"/>
</dbReference>
<dbReference type="GO" id="GO:0009022">
    <property type="term" value="F:tRNA nucleotidyltransferase activity"/>
    <property type="evidence" value="ECO:0007669"/>
    <property type="project" value="UniProtKB-UniRule"/>
</dbReference>
<dbReference type="GO" id="GO:0016075">
    <property type="term" value="P:rRNA catabolic process"/>
    <property type="evidence" value="ECO:0007669"/>
    <property type="project" value="UniProtKB-UniRule"/>
</dbReference>
<dbReference type="GO" id="GO:0006364">
    <property type="term" value="P:rRNA processing"/>
    <property type="evidence" value="ECO:0007669"/>
    <property type="project" value="UniProtKB-KW"/>
</dbReference>
<dbReference type="GO" id="GO:0008033">
    <property type="term" value="P:tRNA processing"/>
    <property type="evidence" value="ECO:0007669"/>
    <property type="project" value="UniProtKB-UniRule"/>
</dbReference>
<dbReference type="CDD" id="cd11362">
    <property type="entry name" value="RNase_PH_bact"/>
    <property type="match status" value="1"/>
</dbReference>
<dbReference type="FunFam" id="3.30.230.70:FF:000003">
    <property type="entry name" value="Ribonuclease PH"/>
    <property type="match status" value="1"/>
</dbReference>
<dbReference type="Gene3D" id="3.30.230.70">
    <property type="entry name" value="GHMP Kinase, N-terminal domain"/>
    <property type="match status" value="1"/>
</dbReference>
<dbReference type="HAMAP" id="MF_00564">
    <property type="entry name" value="RNase_PH"/>
    <property type="match status" value="1"/>
</dbReference>
<dbReference type="InterPro" id="IPR001247">
    <property type="entry name" value="ExoRNase_PH_dom1"/>
</dbReference>
<dbReference type="InterPro" id="IPR015847">
    <property type="entry name" value="ExoRNase_PH_dom2"/>
</dbReference>
<dbReference type="InterPro" id="IPR036345">
    <property type="entry name" value="ExoRNase_PH_dom2_sf"/>
</dbReference>
<dbReference type="InterPro" id="IPR027408">
    <property type="entry name" value="PNPase/RNase_PH_dom_sf"/>
</dbReference>
<dbReference type="InterPro" id="IPR020568">
    <property type="entry name" value="Ribosomal_Su5_D2-typ_SF"/>
</dbReference>
<dbReference type="InterPro" id="IPR050080">
    <property type="entry name" value="RNase_PH"/>
</dbReference>
<dbReference type="InterPro" id="IPR002381">
    <property type="entry name" value="RNase_PH_bac-type"/>
</dbReference>
<dbReference type="InterPro" id="IPR018336">
    <property type="entry name" value="RNase_PH_CS"/>
</dbReference>
<dbReference type="NCBIfam" id="TIGR01966">
    <property type="entry name" value="RNasePH"/>
    <property type="match status" value="1"/>
</dbReference>
<dbReference type="PANTHER" id="PTHR11953">
    <property type="entry name" value="EXOSOME COMPLEX COMPONENT"/>
    <property type="match status" value="1"/>
</dbReference>
<dbReference type="PANTHER" id="PTHR11953:SF0">
    <property type="entry name" value="EXOSOME COMPLEX COMPONENT RRP41"/>
    <property type="match status" value="1"/>
</dbReference>
<dbReference type="Pfam" id="PF01138">
    <property type="entry name" value="RNase_PH"/>
    <property type="match status" value="1"/>
</dbReference>
<dbReference type="Pfam" id="PF03725">
    <property type="entry name" value="RNase_PH_C"/>
    <property type="match status" value="1"/>
</dbReference>
<dbReference type="SUPFAM" id="SSF55666">
    <property type="entry name" value="Ribonuclease PH domain 2-like"/>
    <property type="match status" value="1"/>
</dbReference>
<dbReference type="SUPFAM" id="SSF54211">
    <property type="entry name" value="Ribosomal protein S5 domain 2-like"/>
    <property type="match status" value="1"/>
</dbReference>
<dbReference type="PROSITE" id="PS01277">
    <property type="entry name" value="RIBONUCLEASE_PH"/>
    <property type="match status" value="1"/>
</dbReference>
<sequence>MRPSRRAPDELRAVSLERGVVKYAEGSCMVKFGDTHVLVTATLEERLPPWLKGQGRGWVTAEYGMLPRATLERTRREASAGKQGGRTVEIQRLIGRSLRAAVDLEALGERQITVDCDVIQADGGTRTASITGAWVALADCIGWMKARNMIKTSVLRDNVAAVSCGIYNGTPVLDLDYAEDSEADTDANFVMTGDGRIIEVQGTAEKTPFSQDEFLALLALAKKGVARLVDLQKMAVA</sequence>
<reference key="1">
    <citation type="submission" date="2006-03" db="EMBL/GenBank/DDBJ databases">
        <title>Complete sequence of chromosome of Nitrobacter hamburgensis X14.</title>
        <authorList>
            <consortium name="US DOE Joint Genome Institute"/>
            <person name="Copeland A."/>
            <person name="Lucas S."/>
            <person name="Lapidus A."/>
            <person name="Barry K."/>
            <person name="Detter J.C."/>
            <person name="Glavina del Rio T."/>
            <person name="Hammon N."/>
            <person name="Israni S."/>
            <person name="Dalin E."/>
            <person name="Tice H."/>
            <person name="Pitluck S."/>
            <person name="Chain P."/>
            <person name="Malfatti S."/>
            <person name="Shin M."/>
            <person name="Vergez L."/>
            <person name="Schmutz J."/>
            <person name="Larimer F."/>
            <person name="Land M."/>
            <person name="Hauser L."/>
            <person name="Kyrpides N."/>
            <person name="Ivanova N."/>
            <person name="Ward B."/>
            <person name="Arp D."/>
            <person name="Klotz M."/>
            <person name="Stein L."/>
            <person name="O'Mullan G."/>
            <person name="Starkenburg S."/>
            <person name="Sayavedra L."/>
            <person name="Poret-Peterson A.T."/>
            <person name="Gentry M.E."/>
            <person name="Bruce D."/>
            <person name="Richardson P."/>
        </authorList>
    </citation>
    <scope>NUCLEOTIDE SEQUENCE [LARGE SCALE GENOMIC DNA]</scope>
    <source>
        <strain>DSM 10229 / NCIMB 13809 / X14</strain>
    </source>
</reference>
<feature type="chain" id="PRO_1000024841" description="Ribonuclease PH">
    <location>
        <begin position="1"/>
        <end position="237"/>
    </location>
</feature>
<feature type="binding site" evidence="1">
    <location>
        <position position="86"/>
    </location>
    <ligand>
        <name>phosphate</name>
        <dbReference type="ChEBI" id="CHEBI:43474"/>
        <note>substrate</note>
    </ligand>
</feature>
<feature type="binding site" evidence="1">
    <location>
        <begin position="124"/>
        <end position="126"/>
    </location>
    <ligand>
        <name>phosphate</name>
        <dbReference type="ChEBI" id="CHEBI:43474"/>
        <note>substrate</note>
    </ligand>
</feature>
<name>RNPH_NITHX</name>
<protein>
    <recommendedName>
        <fullName evidence="1">Ribonuclease PH</fullName>
        <shortName evidence="1">RNase PH</shortName>
        <ecNumber evidence="1">2.7.7.56</ecNumber>
    </recommendedName>
    <alternativeName>
        <fullName evidence="1">tRNA nucleotidyltransferase</fullName>
    </alternativeName>
</protein>
<keyword id="KW-0548">Nucleotidyltransferase</keyword>
<keyword id="KW-1185">Reference proteome</keyword>
<keyword id="KW-0694">RNA-binding</keyword>
<keyword id="KW-0698">rRNA processing</keyword>
<keyword id="KW-0808">Transferase</keyword>
<keyword id="KW-0819">tRNA processing</keyword>
<keyword id="KW-0820">tRNA-binding</keyword>
<proteinExistence type="inferred from homology"/>
<comment type="function">
    <text evidence="1">Phosphorolytic 3'-5' exoribonuclease that plays an important role in tRNA 3'-end maturation. Removes nucleotide residues following the 3'-CCA terminus of tRNAs; can also add nucleotides to the ends of RNA molecules by using nucleoside diphosphates as substrates, but this may not be physiologically important. Probably plays a role in initiation of 16S rRNA degradation (leading to ribosome degradation) during starvation.</text>
</comment>
<comment type="catalytic activity">
    <reaction evidence="1">
        <text>tRNA(n+1) + phosphate = tRNA(n) + a ribonucleoside 5'-diphosphate</text>
        <dbReference type="Rhea" id="RHEA:10628"/>
        <dbReference type="Rhea" id="RHEA-COMP:17343"/>
        <dbReference type="Rhea" id="RHEA-COMP:17344"/>
        <dbReference type="ChEBI" id="CHEBI:43474"/>
        <dbReference type="ChEBI" id="CHEBI:57930"/>
        <dbReference type="ChEBI" id="CHEBI:173114"/>
        <dbReference type="EC" id="2.7.7.56"/>
    </reaction>
</comment>
<comment type="subunit">
    <text evidence="1">Homohexameric ring arranged as a trimer of dimers.</text>
</comment>
<comment type="similarity">
    <text evidence="1">Belongs to the RNase PH family.</text>
</comment>
<accession>Q1QRU5</accession>
<organism>
    <name type="scientific">Nitrobacter hamburgensis (strain DSM 10229 / NCIMB 13809 / X14)</name>
    <dbReference type="NCBI Taxonomy" id="323097"/>
    <lineage>
        <taxon>Bacteria</taxon>
        <taxon>Pseudomonadati</taxon>
        <taxon>Pseudomonadota</taxon>
        <taxon>Alphaproteobacteria</taxon>
        <taxon>Hyphomicrobiales</taxon>
        <taxon>Nitrobacteraceae</taxon>
        <taxon>Nitrobacter</taxon>
    </lineage>
</organism>